<keyword id="KW-1015">Disulfide bond</keyword>
<keyword id="KW-1185">Reference proteome</keyword>
<keyword id="KW-0677">Repeat</keyword>
<keyword id="KW-0964">Secreted</keyword>
<keyword id="KW-0732">Signal</keyword>
<feature type="signal peptide" evidence="1">
    <location>
        <begin position="1"/>
        <end position="16"/>
    </location>
</feature>
<feature type="chain" id="PRO_0000017564" description="27 kDa primary mesenchyme-specific spicule protein">
    <location>
        <begin position="17"/>
        <end position="267"/>
    </location>
</feature>
<feature type="repeat" description="1">
    <location>
        <begin position="21"/>
        <end position="24"/>
    </location>
</feature>
<feature type="repeat" description="2">
    <location>
        <begin position="25"/>
        <end position="28"/>
    </location>
</feature>
<feature type="repeat" description="3">
    <location>
        <begin position="29"/>
        <end position="32"/>
    </location>
</feature>
<feature type="repeat" description="4">
    <location>
        <begin position="33"/>
        <end position="36"/>
    </location>
</feature>
<feature type="repeat" description="5">
    <location>
        <begin position="37"/>
        <end position="40"/>
    </location>
</feature>
<feature type="repeat" description="6">
    <location>
        <begin position="41"/>
        <end position="44"/>
    </location>
</feature>
<feature type="repeat" description="7">
    <location>
        <begin position="45"/>
        <end position="48"/>
    </location>
</feature>
<feature type="repeat" description="8">
    <location>
        <begin position="49"/>
        <end position="52"/>
    </location>
</feature>
<feature type="repeat" description="9">
    <location>
        <begin position="53"/>
        <end position="56"/>
    </location>
</feature>
<feature type="repeat" description="10">
    <location>
        <begin position="57"/>
        <end position="60"/>
    </location>
</feature>
<feature type="repeat" description="11">
    <location>
        <begin position="61"/>
        <end position="64"/>
    </location>
</feature>
<feature type="domain" description="C-type lectin" evidence="2">
    <location>
        <begin position="79"/>
        <end position="220"/>
    </location>
</feature>
<feature type="region of interest" description="11 X 4 AA tandem repeats of G-[PQ]-G-[MQ]">
    <location>
        <begin position="20"/>
        <end position="64"/>
    </location>
</feature>
<feature type="region of interest" description="Disordered" evidence="3">
    <location>
        <begin position="44"/>
        <end position="68"/>
    </location>
</feature>
<feature type="disulfide bond" evidence="2">
    <location>
        <begin position="100"/>
        <end position="219"/>
    </location>
</feature>
<feature type="disulfide bond" evidence="2">
    <location>
        <begin position="197"/>
        <end position="211"/>
    </location>
</feature>
<sequence>MKLLAILLVLPALCFGQRHEGPGMGPGMGPGMGPGMGPGMGPGMGPGMGPGMGPGQGQGQGQGQGQVGGSKCKGGWFLIGQQCFKMMSRALKWNDAELMCEQNAPCGTPVLGGVMTIPDIQTSNAVINHLKSLSSTAMAIDIPFWTGLHNKWNALLERYEGWKWPAGWSTTQQPLRFVNWAPREPNNQLLDQQHSYCARMNRMGQWYVVRCDEPMYFACSMPVSPPLVGGANTNPGMGMLVENPAPIINGYTEFESGLLMRNGVGGP</sequence>
<accession>Q26616</accession>
<organism>
    <name type="scientific">Strongylocentrotus purpuratus</name>
    <name type="common">Purple sea urchin</name>
    <dbReference type="NCBI Taxonomy" id="7668"/>
    <lineage>
        <taxon>Eukaryota</taxon>
        <taxon>Metazoa</taxon>
        <taxon>Echinodermata</taxon>
        <taxon>Eleutherozoa</taxon>
        <taxon>Echinozoa</taxon>
        <taxon>Echinoidea</taxon>
        <taxon>Euechinoidea</taxon>
        <taxon>Echinacea</taxon>
        <taxon>Camarodonta</taxon>
        <taxon>Echinidea</taxon>
        <taxon>Strongylocentrotidae</taxon>
        <taxon>Strongylocentrotus</taxon>
    </lineage>
</organism>
<reference key="1">
    <citation type="journal article" date="1995" name="Dev. Biol.">
        <title>Structure, expression, and extracellular targeting of PM27, a skeletal protein associated specifically with growth of the sea urchin larval spicule.</title>
        <authorList>
            <person name="Harkey M.A."/>
            <person name="Klueg K."/>
            <person name="Sheppard P."/>
            <person name="Raff R.A."/>
        </authorList>
    </citation>
    <scope>NUCLEOTIDE SEQUENCE [GENOMIC DNA]</scope>
</reference>
<dbReference type="EMBL" id="U18132">
    <property type="protein sequence ID" value="AAA85689.1"/>
    <property type="molecule type" value="Genomic_DNA"/>
</dbReference>
<dbReference type="RefSeq" id="NP_999630.1">
    <property type="nucleotide sequence ID" value="NM_214465.2"/>
</dbReference>
<dbReference type="SMR" id="Q26616"/>
<dbReference type="STRING" id="7668.Q26616"/>
<dbReference type="EnsemblMetazoa" id="NM_214465">
    <property type="protein sequence ID" value="NP_999630"/>
    <property type="gene ID" value="GeneID_373181"/>
</dbReference>
<dbReference type="GeneID" id="373181"/>
<dbReference type="KEGG" id="spu:373181"/>
<dbReference type="CTD" id="373181"/>
<dbReference type="HOGENOM" id="CLU_1754377_0_0_1"/>
<dbReference type="InParanoid" id="Q26616"/>
<dbReference type="OMA" id="MRPNQPN"/>
<dbReference type="OrthoDB" id="441660at2759"/>
<dbReference type="PhylomeDB" id="Q26616"/>
<dbReference type="Proteomes" id="UP000007110">
    <property type="component" value="Unassembled WGS sequence"/>
</dbReference>
<dbReference type="GO" id="GO:0005576">
    <property type="term" value="C:extracellular region"/>
    <property type="evidence" value="ECO:0007669"/>
    <property type="project" value="UniProtKB-SubCell"/>
</dbReference>
<dbReference type="CDD" id="cd00037">
    <property type="entry name" value="CLECT"/>
    <property type="match status" value="1"/>
</dbReference>
<dbReference type="Gene3D" id="3.10.100.10">
    <property type="entry name" value="Mannose-Binding Protein A, subunit A"/>
    <property type="match status" value="1"/>
</dbReference>
<dbReference type="InterPro" id="IPR001304">
    <property type="entry name" value="C-type_lectin-like"/>
</dbReference>
<dbReference type="InterPro" id="IPR016186">
    <property type="entry name" value="C-type_lectin-like/link_sf"/>
</dbReference>
<dbReference type="InterPro" id="IPR050111">
    <property type="entry name" value="C-type_lectin/snaclec_domain"/>
</dbReference>
<dbReference type="InterPro" id="IPR016187">
    <property type="entry name" value="CTDL_fold"/>
</dbReference>
<dbReference type="PANTHER" id="PTHR22803">
    <property type="entry name" value="MANNOSE, PHOSPHOLIPASE, LECTIN RECEPTOR RELATED"/>
    <property type="match status" value="1"/>
</dbReference>
<dbReference type="Pfam" id="PF00059">
    <property type="entry name" value="Lectin_C"/>
    <property type="match status" value="1"/>
</dbReference>
<dbReference type="SMART" id="SM00034">
    <property type="entry name" value="CLECT"/>
    <property type="match status" value="1"/>
</dbReference>
<dbReference type="SUPFAM" id="SSF56436">
    <property type="entry name" value="C-type lectin-like"/>
    <property type="match status" value="1"/>
</dbReference>
<dbReference type="PROSITE" id="PS50041">
    <property type="entry name" value="C_TYPE_LECTIN_2"/>
    <property type="match status" value="1"/>
</dbReference>
<name>PM27_STRPU</name>
<comment type="function">
    <text>May play a role in the regulation or execution of skeletal growth.</text>
</comment>
<comment type="subcellular location">
    <subcellularLocation>
        <location>Secreted</location>
    </subcellularLocation>
    <text>Secreted to the skeletal compartment and accumulates predominantly at the advancing mineralizing surface of the spicule tips. As the spicules elongate PM27 protein disappears from the more mature mid-shaft regions. May be concentrated at the mineral-nonmineral interface, rather than within the spicule matrix.</text>
</comment>
<comment type="tissue specificity">
    <text>Expressed specifically in the micromere/primary mesenchyme cells (PMC) lineage. Produced uniformly and exclusively by PMCs through the early prism stage and this specificity is further restricted during skeletogenesis to a subpopulation of PMCs associated with the growing tips of the spicules.</text>
</comment>
<comment type="developmental stage">
    <text>Appears at the mesenchyme blastula stage.</text>
</comment>
<comment type="domain">
    <text>The repetitive domain may provide a calcite binding matrix.</text>
</comment>
<protein>
    <recommendedName>
        <fullName>27 kDa primary mesenchyme-specific spicule protein</fullName>
    </recommendedName>
</protein>
<evidence type="ECO:0000255" key="1"/>
<evidence type="ECO:0000255" key="2">
    <source>
        <dbReference type="PROSITE-ProRule" id="PRU00040"/>
    </source>
</evidence>
<evidence type="ECO:0000256" key="3">
    <source>
        <dbReference type="SAM" id="MobiDB-lite"/>
    </source>
</evidence>
<gene>
    <name type="primary">PM27</name>
</gene>
<proteinExistence type="evidence at transcript level"/>